<accession>Q4R555</accession>
<gene>
    <name evidence="2" type="primary">SEPTIN11</name>
    <name type="synonym">SEPT11</name>
    <name type="ORF">QccE-18317</name>
</gene>
<keyword id="KW-0007">Acetylation</keyword>
<keyword id="KW-0131">Cell cycle</keyword>
<keyword id="KW-0132">Cell division</keyword>
<keyword id="KW-0966">Cell projection</keyword>
<keyword id="KW-0175">Coiled coil</keyword>
<keyword id="KW-0963">Cytoplasm</keyword>
<keyword id="KW-0206">Cytoskeleton</keyword>
<keyword id="KW-0342">GTP-binding</keyword>
<keyword id="KW-0547">Nucleotide-binding</keyword>
<keyword id="KW-0597">Phosphoprotein</keyword>
<keyword id="KW-1185">Reference proteome</keyword>
<keyword id="KW-0770">Synapse</keyword>
<dbReference type="EMBL" id="AB169689">
    <property type="protein sequence ID" value="BAE01770.1"/>
    <property type="molecule type" value="mRNA"/>
</dbReference>
<dbReference type="RefSeq" id="NP_001272168.1">
    <property type="nucleotide sequence ID" value="NM_001285239.1"/>
</dbReference>
<dbReference type="SMR" id="Q4R555"/>
<dbReference type="STRING" id="9541.ENSMFAP00000029682"/>
<dbReference type="eggNOG" id="KOG3859">
    <property type="taxonomic scope" value="Eukaryota"/>
</dbReference>
<dbReference type="Proteomes" id="UP000233100">
    <property type="component" value="Unplaced"/>
</dbReference>
<dbReference type="GO" id="GO:0030424">
    <property type="term" value="C:axon"/>
    <property type="evidence" value="ECO:0007669"/>
    <property type="project" value="UniProtKB-SubCell"/>
</dbReference>
<dbReference type="GO" id="GO:0043197">
    <property type="term" value="C:dendritic spine"/>
    <property type="evidence" value="ECO:0007669"/>
    <property type="project" value="UniProtKB-SubCell"/>
</dbReference>
<dbReference type="GO" id="GO:0031105">
    <property type="term" value="C:septin complex"/>
    <property type="evidence" value="ECO:0000250"/>
    <property type="project" value="UniProtKB"/>
</dbReference>
<dbReference type="GO" id="GO:0005525">
    <property type="term" value="F:GTP binding"/>
    <property type="evidence" value="ECO:0007669"/>
    <property type="project" value="UniProtKB-KW"/>
</dbReference>
<dbReference type="GO" id="GO:0051301">
    <property type="term" value="P:cell division"/>
    <property type="evidence" value="ECO:0007669"/>
    <property type="project" value="UniProtKB-KW"/>
</dbReference>
<dbReference type="CDD" id="cd01850">
    <property type="entry name" value="CDC_Septin"/>
    <property type="match status" value="1"/>
</dbReference>
<dbReference type="FunFam" id="3.40.50.300:FF:000036">
    <property type="entry name" value="septin-6 isoform X2"/>
    <property type="match status" value="1"/>
</dbReference>
<dbReference type="Gene3D" id="3.40.50.300">
    <property type="entry name" value="P-loop containing nucleotide triphosphate hydrolases"/>
    <property type="match status" value="1"/>
</dbReference>
<dbReference type="InterPro" id="IPR030379">
    <property type="entry name" value="G_SEPTIN_dom"/>
</dbReference>
<dbReference type="InterPro" id="IPR027417">
    <property type="entry name" value="P-loop_NTPase"/>
</dbReference>
<dbReference type="InterPro" id="IPR016491">
    <property type="entry name" value="Septin"/>
</dbReference>
<dbReference type="PANTHER" id="PTHR18884">
    <property type="entry name" value="SEPTIN"/>
    <property type="match status" value="1"/>
</dbReference>
<dbReference type="Pfam" id="PF00735">
    <property type="entry name" value="Septin"/>
    <property type="match status" value="1"/>
</dbReference>
<dbReference type="PIRSF" id="PIRSF006698">
    <property type="entry name" value="Septin"/>
    <property type="match status" value="1"/>
</dbReference>
<dbReference type="SUPFAM" id="SSF52540">
    <property type="entry name" value="P-loop containing nucleoside triphosphate hydrolases"/>
    <property type="match status" value="1"/>
</dbReference>
<dbReference type="PROSITE" id="PS51719">
    <property type="entry name" value="G_SEPTIN"/>
    <property type="match status" value="1"/>
</dbReference>
<evidence type="ECO:0000250" key="1"/>
<evidence type="ECO:0000250" key="2">
    <source>
        <dbReference type="UniProtKB" id="Q9NVA2"/>
    </source>
</evidence>
<evidence type="ECO:0000255" key="3"/>
<evidence type="ECO:0000255" key="4">
    <source>
        <dbReference type="PROSITE-ProRule" id="PRU01056"/>
    </source>
</evidence>
<evidence type="ECO:0000256" key="5">
    <source>
        <dbReference type="SAM" id="MobiDB-lite"/>
    </source>
</evidence>
<evidence type="ECO:0000305" key="6"/>
<protein>
    <recommendedName>
        <fullName>Septin-11</fullName>
    </recommendedName>
</protein>
<organism>
    <name type="scientific">Macaca fascicularis</name>
    <name type="common">Crab-eating macaque</name>
    <name type="synonym">Cynomolgus monkey</name>
    <dbReference type="NCBI Taxonomy" id="9541"/>
    <lineage>
        <taxon>Eukaryota</taxon>
        <taxon>Metazoa</taxon>
        <taxon>Chordata</taxon>
        <taxon>Craniata</taxon>
        <taxon>Vertebrata</taxon>
        <taxon>Euteleostomi</taxon>
        <taxon>Mammalia</taxon>
        <taxon>Eutheria</taxon>
        <taxon>Euarchontoglires</taxon>
        <taxon>Primates</taxon>
        <taxon>Haplorrhini</taxon>
        <taxon>Catarrhini</taxon>
        <taxon>Cercopithecidae</taxon>
        <taxon>Cercopithecinae</taxon>
        <taxon>Macaca</taxon>
    </lineage>
</organism>
<comment type="function">
    <text evidence="1 6">Filament-forming cytoskeletal GTPase. May play a role in cytokinesis (Potential). May play a role in the cytoarchitecture of neurons, including dendritic arborization and dendritic spines, and in GABAergic synaptic connectivity (By similarity).</text>
</comment>
<comment type="subunit">
    <text evidence="2">Septins polymerize into heterooligomeric protein complexes that form filaments, and can associate with cellular membranes, actin filaments and microtubules (By similarity). Forms homooligomers (By similarity). GTPase activity is required for filament formation (By similarity). Interacts with SEPTIN7, SEPTIN9 and SEPTIN12 (By similarity).</text>
</comment>
<comment type="subcellular location">
    <subcellularLocation>
        <location>Cytoplasm</location>
        <location>Cytoskeleton</location>
    </subcellularLocation>
    <subcellularLocation>
        <location>Synapse</location>
    </subcellularLocation>
    <subcellularLocation>
        <location>Cell projection</location>
        <location>Dendritic spine</location>
    </subcellularLocation>
    <subcellularLocation>
        <location evidence="1">Cell projection</location>
        <location evidence="1">Axon</location>
    </subcellularLocation>
</comment>
<comment type="similarity">
    <text evidence="4">Belongs to the TRAFAC class TrmE-Era-EngA-EngB-Septin-like GTPase superfamily. Septin GTPase family.</text>
</comment>
<sequence>MAVAVGRPSNEELRNLSLSGHVGFDSLPDQLVNKSTSQGFCFNILCVGETGIGKSTLMDTLFNTKFESDPATHNEPGVRLKARSYELQESNVRLKLTIVDTVGFGDQINKDDSYKPIVEYIDAQFEAYLQEELKIKRSLFNYHDTRIHACLYFIAPTGHSLKSLDLVTTKKLDSKVNIIPIIAKADTIAKNELHKFKSKIMSELVSNGVQIYQFPTDEETVAEINATMSVHLPFAVVGSTEEVKIGNKMAKARQYPWGVVQVENENHCDFVKLREMLIRVNMEDLREQTHTRHYELYRRCKLEEMGFKDTDPDSKPFSLQETYEAKRNEFLGELQKKEEEMRQMFVMRVKEKEAELKEAEKELHEKFDLLKRTHQEEKKKVEDKKKELEEEVNNFQKKKAAVQLLQSQAQQSGAQQTKKDKDKKNSPWLCTE</sequence>
<name>SEP11_MACFA</name>
<feature type="initiator methionine" description="Removed" evidence="2">
    <location>
        <position position="1"/>
    </location>
</feature>
<feature type="chain" id="PRO_0000270225" description="Septin-11">
    <location>
        <begin position="2"/>
        <end position="432"/>
    </location>
</feature>
<feature type="domain" description="Septin-type G" evidence="4">
    <location>
        <begin position="38"/>
        <end position="304"/>
    </location>
</feature>
<feature type="region of interest" description="G1 motif" evidence="4">
    <location>
        <begin position="48"/>
        <end position="55"/>
    </location>
</feature>
<feature type="region of interest" description="G3 motif" evidence="4">
    <location>
        <begin position="100"/>
        <end position="103"/>
    </location>
</feature>
<feature type="region of interest" description="G4 motif" evidence="4">
    <location>
        <begin position="183"/>
        <end position="186"/>
    </location>
</feature>
<feature type="region of interest" description="Disordered" evidence="5">
    <location>
        <begin position="403"/>
        <end position="432"/>
    </location>
</feature>
<feature type="coiled-coil region" evidence="3">
    <location>
        <begin position="320"/>
        <end position="413"/>
    </location>
</feature>
<feature type="compositionally biased region" description="Low complexity" evidence="5">
    <location>
        <begin position="403"/>
        <end position="416"/>
    </location>
</feature>
<feature type="binding site" evidence="1">
    <location>
        <begin position="48"/>
        <end position="55"/>
    </location>
    <ligand>
        <name>GTP</name>
        <dbReference type="ChEBI" id="CHEBI:37565"/>
    </ligand>
</feature>
<feature type="binding site" evidence="1">
    <location>
        <position position="103"/>
    </location>
    <ligand>
        <name>GTP</name>
        <dbReference type="ChEBI" id="CHEBI:37565"/>
    </ligand>
</feature>
<feature type="binding site" evidence="1">
    <location>
        <begin position="184"/>
        <end position="192"/>
    </location>
    <ligand>
        <name>GTP</name>
        <dbReference type="ChEBI" id="CHEBI:37565"/>
    </ligand>
</feature>
<feature type="binding site" evidence="1">
    <location>
        <position position="238"/>
    </location>
    <ligand>
        <name>GTP</name>
        <dbReference type="ChEBI" id="CHEBI:37565"/>
    </ligand>
</feature>
<feature type="binding site" evidence="1">
    <location>
        <position position="253"/>
    </location>
    <ligand>
        <name>GTP</name>
        <dbReference type="ChEBI" id="CHEBI:37565"/>
    </ligand>
</feature>
<feature type="modified residue" description="N-acetylalanine" evidence="2">
    <location>
        <position position="2"/>
    </location>
</feature>
<feature type="modified residue" description="Phosphoserine" evidence="2">
    <location>
        <position position="9"/>
    </location>
</feature>
<proteinExistence type="evidence at transcript level"/>
<reference key="1">
    <citation type="submission" date="2005-06" db="EMBL/GenBank/DDBJ databases">
        <title>DNA sequences of macaque genes expressed in brain or testis and its evolutionary implications.</title>
        <authorList>
            <consortium name="International consortium for macaque cDNA sequencing and analysis"/>
        </authorList>
    </citation>
    <scope>NUCLEOTIDE SEQUENCE [LARGE SCALE MRNA]</scope>
    <source>
        <tissue>Brain cortex</tissue>
    </source>
</reference>